<evidence type="ECO:0000250" key="1"/>
<evidence type="ECO:0000250" key="2">
    <source>
        <dbReference type="UniProtKB" id="Q0PF16"/>
    </source>
</evidence>
<evidence type="ECO:0000250" key="3">
    <source>
        <dbReference type="UniProtKB" id="Q9C035"/>
    </source>
</evidence>
<evidence type="ECO:0000255" key="4"/>
<evidence type="ECO:0000255" key="5">
    <source>
        <dbReference type="PROSITE-ProRule" id="PRU00024"/>
    </source>
</evidence>
<evidence type="ECO:0000255" key="6">
    <source>
        <dbReference type="PROSITE-ProRule" id="PRU00175"/>
    </source>
</evidence>
<evidence type="ECO:0000255" key="7">
    <source>
        <dbReference type="PROSITE-ProRule" id="PRU00548"/>
    </source>
</evidence>
<evidence type="ECO:0000305" key="8"/>
<dbReference type="EC" id="2.3.2.27"/>
<dbReference type="EMBL" id="AY899858">
    <property type="protein sequence ID" value="AAX86678.1"/>
    <property type="molecule type" value="Genomic_DNA"/>
</dbReference>
<dbReference type="EMBL" id="AY899852">
    <property type="protein sequence ID" value="AAX86678.1"/>
    <property type="status" value="JOINED"/>
    <property type="molecule type" value="Genomic_DNA"/>
</dbReference>
<dbReference type="EMBL" id="AY899853">
    <property type="protein sequence ID" value="AAX86678.1"/>
    <property type="status" value="JOINED"/>
    <property type="molecule type" value="Genomic_DNA"/>
</dbReference>
<dbReference type="EMBL" id="AY899854">
    <property type="protein sequence ID" value="AAX86678.1"/>
    <property type="status" value="JOINED"/>
    <property type="molecule type" value="Genomic_DNA"/>
</dbReference>
<dbReference type="EMBL" id="AY899855">
    <property type="protein sequence ID" value="AAX86678.1"/>
    <property type="status" value="JOINED"/>
    <property type="molecule type" value="Genomic_DNA"/>
</dbReference>
<dbReference type="EMBL" id="AY899856">
    <property type="protein sequence ID" value="AAX86678.1"/>
    <property type="status" value="JOINED"/>
    <property type="molecule type" value="Genomic_DNA"/>
</dbReference>
<dbReference type="EMBL" id="AY899857">
    <property type="protein sequence ID" value="AAX86678.1"/>
    <property type="status" value="JOINED"/>
    <property type="molecule type" value="Genomic_DNA"/>
</dbReference>
<dbReference type="EMBL" id="DQ229283">
    <property type="protein sequence ID" value="ABC33739.1"/>
    <property type="molecule type" value="Genomic_DNA"/>
</dbReference>
<dbReference type="SMR" id="Q1ACD7"/>
<dbReference type="FunCoup" id="Q1ACD7">
    <property type="interactions" value="200"/>
</dbReference>
<dbReference type="STRING" id="61853.ENSNLEP00000043160"/>
<dbReference type="eggNOG" id="KOG2177">
    <property type="taxonomic scope" value="Eukaryota"/>
</dbReference>
<dbReference type="InParanoid" id="Q1ACD7"/>
<dbReference type="UniPathway" id="UPA00143"/>
<dbReference type="Proteomes" id="UP000001073">
    <property type="component" value="Unplaced"/>
</dbReference>
<dbReference type="GO" id="GO:0005634">
    <property type="term" value="C:nucleus"/>
    <property type="evidence" value="ECO:0007669"/>
    <property type="project" value="UniProtKB-SubCell"/>
</dbReference>
<dbReference type="GO" id="GO:0000932">
    <property type="term" value="C:P-body"/>
    <property type="evidence" value="ECO:0000250"/>
    <property type="project" value="UniProtKB"/>
</dbReference>
<dbReference type="GO" id="GO:0038187">
    <property type="term" value="F:pattern recognition receptor activity"/>
    <property type="evidence" value="ECO:0000250"/>
    <property type="project" value="UniProtKB"/>
</dbReference>
<dbReference type="GO" id="GO:0004842">
    <property type="term" value="F:ubiquitin-protein transferase activity"/>
    <property type="evidence" value="ECO:0000250"/>
    <property type="project" value="UniProtKB"/>
</dbReference>
<dbReference type="GO" id="GO:0008270">
    <property type="term" value="F:zinc ion binding"/>
    <property type="evidence" value="ECO:0007669"/>
    <property type="project" value="UniProtKB-KW"/>
</dbReference>
<dbReference type="GO" id="GO:0002218">
    <property type="term" value="P:activation of innate immune response"/>
    <property type="evidence" value="ECO:0000250"/>
    <property type="project" value="UniProtKB"/>
</dbReference>
<dbReference type="GO" id="GO:0006914">
    <property type="term" value="P:autophagy"/>
    <property type="evidence" value="ECO:0007669"/>
    <property type="project" value="UniProtKB-KW"/>
</dbReference>
<dbReference type="GO" id="GO:0051607">
    <property type="term" value="P:defense response to virus"/>
    <property type="evidence" value="ECO:0007669"/>
    <property type="project" value="UniProtKB-KW"/>
</dbReference>
<dbReference type="GO" id="GO:0045087">
    <property type="term" value="P:innate immune response"/>
    <property type="evidence" value="ECO:0007669"/>
    <property type="project" value="UniProtKB-KW"/>
</dbReference>
<dbReference type="GO" id="GO:0043123">
    <property type="term" value="P:positive regulation of canonical NF-kappaB signal transduction"/>
    <property type="evidence" value="ECO:0000250"/>
    <property type="project" value="UniProtKB"/>
</dbReference>
<dbReference type="GO" id="GO:0043410">
    <property type="term" value="P:positive regulation of MAPK cascade"/>
    <property type="evidence" value="ECO:0000250"/>
    <property type="project" value="UniProtKB"/>
</dbReference>
<dbReference type="GO" id="GO:0051092">
    <property type="term" value="P:positive regulation of NF-kappaB transcription factor activity"/>
    <property type="evidence" value="ECO:0000250"/>
    <property type="project" value="UniProtKB"/>
</dbReference>
<dbReference type="GO" id="GO:0070534">
    <property type="term" value="P:protein K63-linked ubiquitination"/>
    <property type="evidence" value="ECO:0000250"/>
    <property type="project" value="UniProtKB"/>
</dbReference>
<dbReference type="GO" id="GO:0031664">
    <property type="term" value="P:regulation of lipopolysaccharide-mediated signaling pathway"/>
    <property type="evidence" value="ECO:0000250"/>
    <property type="project" value="UniProtKB"/>
</dbReference>
<dbReference type="CDD" id="cd19761">
    <property type="entry name" value="Bbox2_TRIM5-like"/>
    <property type="match status" value="1"/>
</dbReference>
<dbReference type="CDD" id="cd16591">
    <property type="entry name" value="RING-HC_TRIM5-like_C-IV"/>
    <property type="match status" value="1"/>
</dbReference>
<dbReference type="CDD" id="cd15822">
    <property type="entry name" value="SPRY_PRY_TRIM5"/>
    <property type="match status" value="1"/>
</dbReference>
<dbReference type="FunFam" id="2.60.120.920:FF:000023">
    <property type="entry name" value="Tripartite motif-containing 5 (Predicted)"/>
    <property type="match status" value="1"/>
</dbReference>
<dbReference type="FunFam" id="3.30.160.60:FF:000386">
    <property type="entry name" value="Tripartite motif-containing 5 (Predicted)"/>
    <property type="match status" value="1"/>
</dbReference>
<dbReference type="FunFam" id="3.30.40.10:FF:000144">
    <property type="entry name" value="Tripartite motif-containing 5 (Predicted)"/>
    <property type="match status" value="1"/>
</dbReference>
<dbReference type="Gene3D" id="2.60.120.920">
    <property type="match status" value="1"/>
</dbReference>
<dbReference type="Gene3D" id="3.30.160.60">
    <property type="entry name" value="Classic Zinc Finger"/>
    <property type="match status" value="1"/>
</dbReference>
<dbReference type="Gene3D" id="3.30.40.10">
    <property type="entry name" value="Zinc/RING finger domain, C3HC4 (zinc finger)"/>
    <property type="match status" value="1"/>
</dbReference>
<dbReference type="InterPro" id="IPR001870">
    <property type="entry name" value="B30.2/SPRY"/>
</dbReference>
<dbReference type="InterPro" id="IPR043136">
    <property type="entry name" value="B30.2/SPRY_sf"/>
</dbReference>
<dbReference type="InterPro" id="IPR003879">
    <property type="entry name" value="Butyrophylin_SPRY"/>
</dbReference>
<dbReference type="InterPro" id="IPR013320">
    <property type="entry name" value="ConA-like_dom_sf"/>
</dbReference>
<dbReference type="InterPro" id="IPR003877">
    <property type="entry name" value="SPRY_dom"/>
</dbReference>
<dbReference type="InterPro" id="IPR050143">
    <property type="entry name" value="TRIM/RBCC"/>
</dbReference>
<dbReference type="InterPro" id="IPR027370">
    <property type="entry name" value="Znf-RING_euk"/>
</dbReference>
<dbReference type="InterPro" id="IPR000315">
    <property type="entry name" value="Znf_B-box"/>
</dbReference>
<dbReference type="InterPro" id="IPR001841">
    <property type="entry name" value="Znf_RING"/>
</dbReference>
<dbReference type="InterPro" id="IPR013083">
    <property type="entry name" value="Znf_RING/FYVE/PHD"/>
</dbReference>
<dbReference type="InterPro" id="IPR017907">
    <property type="entry name" value="Znf_RING_CS"/>
</dbReference>
<dbReference type="PANTHER" id="PTHR24103">
    <property type="entry name" value="E3 UBIQUITIN-PROTEIN LIGASE TRIM"/>
    <property type="match status" value="1"/>
</dbReference>
<dbReference type="Pfam" id="PF00622">
    <property type="entry name" value="SPRY"/>
    <property type="match status" value="1"/>
</dbReference>
<dbReference type="Pfam" id="PF00643">
    <property type="entry name" value="zf-B_box"/>
    <property type="match status" value="1"/>
</dbReference>
<dbReference type="Pfam" id="PF13445">
    <property type="entry name" value="zf-RING_UBOX"/>
    <property type="match status" value="1"/>
</dbReference>
<dbReference type="PRINTS" id="PR01407">
    <property type="entry name" value="BUTYPHLNCDUF"/>
</dbReference>
<dbReference type="SMART" id="SM00336">
    <property type="entry name" value="BBOX"/>
    <property type="match status" value="1"/>
</dbReference>
<dbReference type="SMART" id="SM00184">
    <property type="entry name" value="RING"/>
    <property type="match status" value="1"/>
</dbReference>
<dbReference type="SMART" id="SM00449">
    <property type="entry name" value="SPRY"/>
    <property type="match status" value="1"/>
</dbReference>
<dbReference type="SUPFAM" id="SSF57845">
    <property type="entry name" value="B-box zinc-binding domain"/>
    <property type="match status" value="1"/>
</dbReference>
<dbReference type="SUPFAM" id="SSF49899">
    <property type="entry name" value="Concanavalin A-like lectins/glucanases"/>
    <property type="match status" value="1"/>
</dbReference>
<dbReference type="SUPFAM" id="SSF57850">
    <property type="entry name" value="RING/U-box"/>
    <property type="match status" value="1"/>
</dbReference>
<dbReference type="PROSITE" id="PS50188">
    <property type="entry name" value="B302_SPRY"/>
    <property type="match status" value="1"/>
</dbReference>
<dbReference type="PROSITE" id="PS50119">
    <property type="entry name" value="ZF_BBOX"/>
    <property type="match status" value="1"/>
</dbReference>
<dbReference type="PROSITE" id="PS00518">
    <property type="entry name" value="ZF_RING_1"/>
    <property type="match status" value="1"/>
</dbReference>
<dbReference type="PROSITE" id="PS50089">
    <property type="entry name" value="ZF_RING_2"/>
    <property type="match status" value="1"/>
</dbReference>
<feature type="initiator methionine" description="Removed" evidence="3">
    <location>
        <position position="1"/>
    </location>
</feature>
<feature type="chain" id="PRO_0000273460" description="Tripartite motif-containing protein 5">
    <location>
        <begin position="2"/>
        <end position="494"/>
    </location>
</feature>
<feature type="domain" description="B30.2/SPRY" evidence="7">
    <location>
        <begin position="282"/>
        <end position="494"/>
    </location>
</feature>
<feature type="zinc finger region" description="RING-type" evidence="6">
    <location>
        <begin position="15"/>
        <end position="59"/>
    </location>
</feature>
<feature type="zinc finger region" description="B box-type" evidence="5">
    <location>
        <begin position="91"/>
        <end position="133"/>
    </location>
</feature>
<feature type="region of interest" description="Required for interaction with GABARAP and for autophagy" evidence="2">
    <location>
        <begin position="186"/>
        <end position="199"/>
    </location>
</feature>
<feature type="coiled-coil region" evidence="4">
    <location>
        <begin position="132"/>
        <end position="241"/>
    </location>
</feature>
<feature type="binding site" evidence="5">
    <location>
        <position position="96"/>
    </location>
    <ligand>
        <name>Zn(2+)</name>
        <dbReference type="ChEBI" id="CHEBI:29105"/>
    </ligand>
</feature>
<feature type="binding site" evidence="5">
    <location>
        <position position="99"/>
    </location>
    <ligand>
        <name>Zn(2+)</name>
        <dbReference type="ChEBI" id="CHEBI:29105"/>
    </ligand>
</feature>
<feature type="binding site" evidence="5">
    <location>
        <position position="118"/>
    </location>
    <ligand>
        <name>Zn(2+)</name>
        <dbReference type="ChEBI" id="CHEBI:29105"/>
    </ligand>
</feature>
<feature type="binding site" evidence="5">
    <location>
        <position position="124"/>
    </location>
    <ligand>
        <name>Zn(2+)</name>
        <dbReference type="ChEBI" id="CHEBI:29105"/>
    </ligand>
</feature>
<feature type="modified residue" description="N-acetylalanine" evidence="3">
    <location>
        <position position="2"/>
    </location>
</feature>
<feature type="modified residue" description="Phosphoserine" evidence="3">
    <location>
        <position position="86"/>
    </location>
</feature>
<feature type="sequence conflict" description="In Ref. 1; AAX86678." evidence="8" ref="1">
    <original>Q</original>
    <variation>R</variation>
    <location>
        <position position="68"/>
    </location>
</feature>
<feature type="sequence conflict" description="In Ref. 1; AAX86678." evidence="8" ref="1">
    <original>V</original>
    <variation>M</variation>
    <location>
        <position position="141"/>
    </location>
</feature>
<feature type="sequence conflict" description="In Ref. 1; AAX86678." evidence="8" ref="1">
    <original>V</original>
    <variation>I</variation>
    <location>
        <position position="254"/>
    </location>
</feature>
<feature type="sequence conflict" description="In Ref. 1; AAX86678." evidence="8" ref="1">
    <original>N</original>
    <variation>K</variation>
    <location>
        <position position="265"/>
    </location>
</feature>
<feature type="sequence conflict" description="In Ref. 1; AAX86678." evidence="8" ref="1">
    <original>KK</original>
    <variation>EE</variation>
    <location>
        <begin position="287"/>
        <end position="288"/>
    </location>
</feature>
<feature type="sequence conflict" description="In Ref. 1; AAX86678." evidence="8" ref="1">
    <original>N</original>
    <variation>S</variation>
    <location>
        <position position="344"/>
    </location>
</feature>
<feature type="sequence conflict" description="In Ref. 1; AAX86678." evidence="8" ref="1">
    <original>R</original>
    <variation>L</variation>
    <location>
        <position position="350"/>
    </location>
</feature>
<feature type="sequence conflict" description="In Ref. 1; AAX86678." evidence="8" ref="1">
    <original>F</original>
    <variation>L</variation>
    <location>
        <position position="380"/>
    </location>
</feature>
<feature type="sequence conflict" description="In Ref. 1; AAX86678." evidence="8" ref="1">
    <original>F</original>
    <variation>V</variation>
    <location>
        <position position="460"/>
    </location>
</feature>
<name>TRIM5_NOMLE</name>
<reference key="1">
    <citation type="journal article" date="2005" name="Gene">
        <title>Adaptive evolution of primate TRIM5alpha, a gene restricting HIV-1 infection.</title>
        <authorList>
            <person name="Liu H.L."/>
            <person name="Wang Y.Q."/>
            <person name="Liao C.H."/>
            <person name="Kuang Y.Q."/>
            <person name="Zheng Y.T."/>
            <person name="Su B."/>
        </authorList>
    </citation>
    <scope>NUCLEOTIDE SEQUENCE [GENOMIC DNA]</scope>
</reference>
<reference key="2">
    <citation type="journal article" date="2006" name="Retrovirology">
        <title>Patterns of evolution of host proteins involved in retroviral pathogenesis.</title>
        <authorList>
            <person name="Ortiz M."/>
            <person name="Bleiber G."/>
            <person name="Martinez R."/>
            <person name="Kaessmann H."/>
            <person name="Telenti A."/>
        </authorList>
    </citation>
    <scope>NUCLEOTIDE SEQUENCE [GENOMIC DNA]</scope>
</reference>
<keyword id="KW-0007">Acetylation</keyword>
<keyword id="KW-0051">Antiviral defense</keyword>
<keyword id="KW-0072">Autophagy</keyword>
<keyword id="KW-0175">Coiled coil</keyword>
<keyword id="KW-0963">Cytoplasm</keyword>
<keyword id="KW-0391">Immunity</keyword>
<keyword id="KW-0399">Innate immunity</keyword>
<keyword id="KW-0479">Metal-binding</keyword>
<keyword id="KW-0539">Nucleus</keyword>
<keyword id="KW-0597">Phosphoprotein</keyword>
<keyword id="KW-1185">Reference proteome</keyword>
<keyword id="KW-0808">Transferase</keyword>
<keyword id="KW-0832">Ubl conjugation</keyword>
<keyword id="KW-0833">Ubl conjugation pathway</keyword>
<keyword id="KW-0862">Zinc</keyword>
<keyword id="KW-0863">Zinc-finger</keyword>
<organism>
    <name type="scientific">Nomascus leucogenys</name>
    <name type="common">Northern white-cheeked gibbon</name>
    <name type="synonym">Hylobates leucogenys</name>
    <dbReference type="NCBI Taxonomy" id="61853"/>
    <lineage>
        <taxon>Eukaryota</taxon>
        <taxon>Metazoa</taxon>
        <taxon>Chordata</taxon>
        <taxon>Craniata</taxon>
        <taxon>Vertebrata</taxon>
        <taxon>Euteleostomi</taxon>
        <taxon>Mammalia</taxon>
        <taxon>Eutheria</taxon>
        <taxon>Euarchontoglires</taxon>
        <taxon>Primates</taxon>
        <taxon>Haplorrhini</taxon>
        <taxon>Catarrhini</taxon>
        <taxon>Hylobatidae</taxon>
        <taxon>Nomascus</taxon>
    </lineage>
</organism>
<proteinExistence type="inferred from homology"/>
<protein>
    <recommendedName>
        <fullName>Tripartite motif-containing protein 5</fullName>
        <ecNumber>2.3.2.27</ecNumber>
    </recommendedName>
    <alternativeName>
        <fullName evidence="8">RING-type E3 ubiquitin transferase TRIM5</fullName>
    </alternativeName>
    <alternativeName>
        <fullName>TRIM5alpha</fullName>
    </alternativeName>
</protein>
<sequence>MASGILVNVKEEVTCPICLELLTQPLSLDCGHSFCQACLTANHKTSMPDEGERSCPVCRISYQHKNIQPNRHVANIVEKLREVKLSPEEGQKVDHCARHGEKLLLFCREDRKVICWLCERSQEHRGHHTFLTEEVAQEYQVKLQAALQMLRQKQQEAEELEADIREEKASWKTQIQYDKTNILADFEQLRHILDWVESNELQNLEKEEKDVLKRLMKSEIEMVQQTQSVRELISDLEHRLQGSVMELLQGVDGVIKRMKNVTLKNPETFPKNQRRVFRAADLKVMLKKLRELRDVQHYWVDVTVAPNNISYAVISEDMRQVSSPEPQIIYEAQGTISQTFVNFNYCTGIRGSQSITSGKHYWEVDVSKKSAWILGVCAGFQPDAMYNIEQNENYQPKYGYWVIGLEERVKCNAFQDGSFHTPSAPFIVPLSVNICPDRVGVFLDYEACTLSFFNITNHGFLIYKFSHCSFSQPVFPYLNPRKCTVPMTLCSPSS</sequence>
<comment type="function">
    <text evidence="3">Capsid-specific restriction factor that prevents infection from non-host-adapted retroviruses. Blocks viral replication early in the life cycle, after viral entry but before reverse transcription. In addition to acting as a capsid-specific restriction factor, also acts as a pattern recognition receptor that activates innate immune signaling in response to the retroviral capsid lattice. Binding to the viral capsid triggers its E3 ubiquitin ligase activity, and in concert with the heterodimeric ubiquitin conjugating enzyme complex UBE2V1-UBE2N (also known as UBC13-UEV1A complex) generates 'Lys-63'-linked polyubiquitin chains, which in turn are catalysts in the autophosphorylation of the MAP3K7/TAK1 complex (includes TAK1, TAB2, and TAB3). Activation of the MAP3K7/TAK1 complex by autophosphorylation results in the induction and expression of NF-kappa-B and MAPK-responsive inflammatory genes, thereby leading to an innate immune response in the infected cell. Plays a role in regulating autophagy through activation of autophagy regulator BECN1 by causing its dissociation from its inhibitors BCL2 and TAB2.</text>
</comment>
<comment type="catalytic activity">
    <reaction>
        <text>S-ubiquitinyl-[E2 ubiquitin-conjugating enzyme]-L-cysteine + [acceptor protein]-L-lysine = [E2 ubiquitin-conjugating enzyme]-L-cysteine + N(6)-ubiquitinyl-[acceptor protein]-L-lysine.</text>
        <dbReference type="EC" id="2.3.2.27"/>
    </reaction>
</comment>
<comment type="pathway">
    <text>Protein modification; protein ubiquitination.</text>
</comment>
<comment type="subunit">
    <text evidence="2 3">Can form homodimers and homotrimers. In addition to lower-order dimerization, also exhibits a higher-order multimerization and both low- and high-order multimerizations are essential for its restriction activity. Interacts with BTBD1 and BTBD2. Interacts with PSMC4, PSMC5, PSMD7 and HSPA8/HSC70. Interacts (via B30.2/SPRY domain) with HSPA1A/B. Interacts with PSMC2, MAP3K7/TAK1, TAB2 and TAB3. Interacts with SQSTM1. Interacts with TRIM6 and TRIM34. Interacts with ULK1 (phosphorylated form), GABARAP, GABARAPL1, GABARAPL2, MAP1LC3A, MAP1LC3C and BECN1.</text>
</comment>
<comment type="subcellular location">
    <subcellularLocation>
        <location evidence="2">Cytoplasm</location>
    </subcellularLocation>
    <subcellularLocation>
        <location evidence="2">Nucleus</location>
    </subcellularLocation>
    <text evidence="2">Predominantly localizes in cytoplasmic bodies. Localization may be influenced by the coexpression of other TRIM proteins, hence partial nuclear localization is observed in the presence of TRIM22 or TRIM27. In cytoplasmic bodies, colocalizes with proteasomal subunits and SQSTM1.</text>
</comment>
<comment type="domain">
    <text evidence="2 3">The B box-type zinc finger domain and the coiled-coil domain contribute to the higher and low order multimerization respectively which is essential for restriction activity. The coiled coil domain is important for higher order multimerization by promoting the initial dimerization.</text>
</comment>
<comment type="domain">
    <text evidence="1">The B30.2/SPRY domain acts as a capsid recognition domain. Polymorphisms in this domain explain the observed species-specific differences among orthologs (By similarity).</text>
</comment>
<comment type="domain">
    <text evidence="1">The RING-type zinc finger domain confers E3 ubiquitin ligase activity and is essential for retrovirus restriction activity, autoubiquitination and higher-order multimerization.</text>
</comment>
<comment type="PTM">
    <text evidence="1">Degraded in a proteasome-independent fashion in the absence of viral infection but in a proteasome-dependent fashion following exposure to restriction sensitive virus.</text>
</comment>
<comment type="PTM">
    <text evidence="1">Autoubiquitinated in a RING finger- and UBE2D2-dependent manner. Monoubiquitinated by TRIM21. Deubiquitinated by Yersinia YopJ. Ubiquitination may not lead to proteasomal degradation (By similarity).</text>
</comment>
<comment type="similarity">
    <text evidence="8">Belongs to the TRIM/RBCC family.</text>
</comment>
<accession>Q1ACD7</accession>
<accession>Q2YEN5</accession>
<gene>
    <name type="primary">TRIM5</name>
</gene>